<name>CSK2B_PIG</name>
<protein>
    <recommendedName>
        <fullName>Casein kinase II subunit beta</fullName>
        <shortName>CK II beta</shortName>
    </recommendedName>
    <alternativeName>
        <fullName>Phosvitin</fullName>
    </alternativeName>
</protein>
<evidence type="ECO:0000250" key="1"/>
<evidence type="ECO:0000250" key="2">
    <source>
        <dbReference type="UniProtKB" id="P67870"/>
    </source>
</evidence>
<evidence type="ECO:0000250" key="3">
    <source>
        <dbReference type="UniProtKB" id="P67871"/>
    </source>
</evidence>
<evidence type="ECO:0000305" key="4"/>
<organism>
    <name type="scientific">Sus scrofa</name>
    <name type="common">Pig</name>
    <dbReference type="NCBI Taxonomy" id="9823"/>
    <lineage>
        <taxon>Eukaryota</taxon>
        <taxon>Metazoa</taxon>
        <taxon>Chordata</taxon>
        <taxon>Craniata</taxon>
        <taxon>Vertebrata</taxon>
        <taxon>Euteleostomi</taxon>
        <taxon>Mammalia</taxon>
        <taxon>Eutheria</taxon>
        <taxon>Laurasiatheria</taxon>
        <taxon>Artiodactyla</taxon>
        <taxon>Suina</taxon>
        <taxon>Suidae</taxon>
        <taxon>Sus</taxon>
    </lineage>
</organism>
<comment type="function">
    <text evidence="2 3">Regulatory subunit of casein kinase II/CK2. As part of the kinase complex regulates the basal catalytic activity of the alpha subunit a constitutively active serine/threonine-protein kinase that phosphorylates a large number of substrates containing acidic residues C-terminal to the phosphorylated serine or threonine (By similarity). Participates in Wnt signaling.</text>
</comment>
<comment type="subunit">
    <text evidence="1 2">Casein kinase II/CK2 is a tetramer composed of an alpha subunit, an alpha' subunit and two beta subunits. The beta subunit dimerization is mediated by zinc ions. Interacts with DYNLT2 (By similarity). Interacts with CD163. Also a component of a CK2-SPT16-SSRP1 complex composed of SSRP1, SUPT16H, CSNK2A1, CSNK2A2 and CSNK2B, the complex associating following UV irradiation. Interacts with MUSK; mediates phosphorylation of MUSK by CK2. Interacts with FGF1; this interaction is increased in the presence of FIBP, suggesting a possible cooperative interaction between CSNKB and FIBP in binding to FGF1 (By similarity). Interacts (via KSSR motif) with ARK2N. Interacts with JUN and ARK2N; mediates the interaction between ARK2N and JUN (By similarity).</text>
</comment>
<comment type="subcellular location">
    <subcellularLocation>
        <location evidence="2">Nucleus</location>
    </subcellularLocation>
</comment>
<comment type="domain">
    <text evidence="2">The KSSR motif is part of a protein interaction pocket that mediates interaction with cellular and viral proteins.</text>
</comment>
<comment type="PTM">
    <text evidence="1">Phosphorylated by alpha subunit. Also a component of a CK2-SPT16-SSRP1 complex composed of SSRP1, SUPT16H, CSNK2A1, CSNK2A2 and CSNK2B, the complex associating following UV irradiation (By similarity).</text>
</comment>
<comment type="similarity">
    <text evidence="4">Belongs to the casein kinase 2 subunit beta family.</text>
</comment>
<reference key="1">
    <citation type="journal article" date="1991" name="Biochim. Biophys. Acta">
        <title>The beta subunit of casein kinase II: cloning of cDNAs from murine and porcine origin and expression of the porcine sequence as a fusion protein.</title>
        <authorList>
            <person name="Boldyreff B."/>
            <person name="Piontek K."/>
            <person name="Schmidt-Spaniol I."/>
            <person name="Issinger O.-J."/>
        </authorList>
    </citation>
    <scope>NUCLEOTIDE SEQUENCE [MRNA]</scope>
</reference>
<dbReference type="EMBL" id="X56503">
    <property type="protein sequence ID" value="CAA39858.1"/>
    <property type="molecule type" value="mRNA"/>
</dbReference>
<dbReference type="PIR" id="S14725">
    <property type="entry name" value="S14725"/>
</dbReference>
<dbReference type="RefSeq" id="NP_001138849.1">
    <property type="nucleotide sequence ID" value="NM_001145377.2"/>
</dbReference>
<dbReference type="RefSeq" id="XP_005665847.1">
    <property type="nucleotide sequence ID" value="XM_005665790.1"/>
</dbReference>
<dbReference type="SMR" id="P67872"/>
<dbReference type="FunCoup" id="P67872">
    <property type="interactions" value="3170"/>
</dbReference>
<dbReference type="STRING" id="9823.ENSSSCP00000028408"/>
<dbReference type="PaxDb" id="9823-ENSSSCP00000030176"/>
<dbReference type="PeptideAtlas" id="P67872"/>
<dbReference type="Ensembl" id="ENSSSCT00000074242.3">
    <property type="protein sequence ID" value="ENSSSCP00000065178.1"/>
    <property type="gene ID" value="ENSSSCG00000001414.7"/>
</dbReference>
<dbReference type="Ensembl" id="ENSSSCT00025107556.1">
    <property type="protein sequence ID" value="ENSSSCP00025048520.1"/>
    <property type="gene ID" value="ENSSSCG00025077362.1"/>
</dbReference>
<dbReference type="Ensembl" id="ENSSSCT00025107559.1">
    <property type="protein sequence ID" value="ENSSSCP00025048522.1"/>
    <property type="gene ID" value="ENSSSCG00025077362.1"/>
</dbReference>
<dbReference type="Ensembl" id="ENSSSCT00030084898.1">
    <property type="protein sequence ID" value="ENSSSCP00030039098.1"/>
    <property type="gene ID" value="ENSSSCG00030060681.1"/>
</dbReference>
<dbReference type="Ensembl" id="ENSSSCT00030084927.1">
    <property type="protein sequence ID" value="ENSSSCP00030039112.1"/>
    <property type="gene ID" value="ENSSSCG00030060681.1"/>
</dbReference>
<dbReference type="Ensembl" id="ENSSSCT00035019445.1">
    <property type="protein sequence ID" value="ENSSSCP00035006911.1"/>
    <property type="gene ID" value="ENSSSCG00035015232.1"/>
</dbReference>
<dbReference type="Ensembl" id="ENSSSCT00040078460.1">
    <property type="protein sequence ID" value="ENSSSCP00040033841.1"/>
    <property type="gene ID" value="ENSSSCG00040057631.1"/>
</dbReference>
<dbReference type="Ensembl" id="ENSSSCT00040078543.1">
    <property type="protein sequence ID" value="ENSSSCP00040033885.1"/>
    <property type="gene ID" value="ENSSSCG00040057631.1"/>
</dbReference>
<dbReference type="Ensembl" id="ENSSSCT00045052619.1">
    <property type="protein sequence ID" value="ENSSSCP00045036592.1"/>
    <property type="gene ID" value="ENSSSCG00045030572.1"/>
</dbReference>
<dbReference type="Ensembl" id="ENSSSCT00045052736.1">
    <property type="protein sequence ID" value="ENSSSCP00045036677.1"/>
    <property type="gene ID" value="ENSSSCG00045030572.1"/>
</dbReference>
<dbReference type="Ensembl" id="ENSSSCT00050011052.1">
    <property type="protein sequence ID" value="ENSSSCP00050004751.1"/>
    <property type="gene ID" value="ENSSSCG00050008006.1"/>
</dbReference>
<dbReference type="Ensembl" id="ENSSSCT00050011058.1">
    <property type="protein sequence ID" value="ENSSSCP00050004754.1"/>
    <property type="gene ID" value="ENSSSCG00050008006.1"/>
</dbReference>
<dbReference type="Ensembl" id="ENSSSCT00055048596.1">
    <property type="protein sequence ID" value="ENSSSCP00055038787.1"/>
    <property type="gene ID" value="ENSSSCG00055024427.1"/>
</dbReference>
<dbReference type="Ensembl" id="ENSSSCT00055048674.1">
    <property type="protein sequence ID" value="ENSSSCP00055038846.1"/>
    <property type="gene ID" value="ENSSSCG00055024427.1"/>
</dbReference>
<dbReference type="Ensembl" id="ENSSSCT00060074018.1">
    <property type="protein sequence ID" value="ENSSSCP00060031920.1"/>
    <property type="gene ID" value="ENSSSCG00060054304.1"/>
</dbReference>
<dbReference type="Ensembl" id="ENSSSCT00060074034.1">
    <property type="protein sequence ID" value="ENSSSCP00060031923.1"/>
    <property type="gene ID" value="ENSSSCG00060054304.1"/>
</dbReference>
<dbReference type="Ensembl" id="ENSSSCT00065053493.1">
    <property type="protein sequence ID" value="ENSSSCP00065023247.1"/>
    <property type="gene ID" value="ENSSSCG00065039122.1"/>
</dbReference>
<dbReference type="Ensembl" id="ENSSSCT00065053499.1">
    <property type="protein sequence ID" value="ENSSSCP00065023249.1"/>
    <property type="gene ID" value="ENSSSCG00065039122.1"/>
</dbReference>
<dbReference type="Ensembl" id="ENSSSCT00085021297">
    <property type="protein sequence ID" value="ENSSSCP00085014668"/>
    <property type="gene ID" value="ENSSSCG00085011356"/>
</dbReference>
<dbReference type="Ensembl" id="ENSSSCT00105039704">
    <property type="protein sequence ID" value="ENSSSCP00105027526"/>
    <property type="gene ID" value="ENSSSCG00105020807"/>
</dbReference>
<dbReference type="Ensembl" id="ENSSSCT00110051094">
    <property type="protein sequence ID" value="ENSSSCP00110035728"/>
    <property type="gene ID" value="ENSSSCG00110026458"/>
</dbReference>
<dbReference type="Ensembl" id="ENSSSCT00115020315">
    <property type="protein sequence ID" value="ENSSSCP00115019241"/>
    <property type="gene ID" value="ENSSSCG00115011664"/>
</dbReference>
<dbReference type="Ensembl" id="ENSSSCT00130049265">
    <property type="protein sequence ID" value="ENSSSCP00130034877"/>
    <property type="gene ID" value="ENSSSCG00130025333"/>
</dbReference>
<dbReference type="GeneID" id="397211"/>
<dbReference type="KEGG" id="ssc:397211"/>
<dbReference type="CTD" id="1460"/>
<dbReference type="eggNOG" id="KOG3092">
    <property type="taxonomic scope" value="Eukaryota"/>
</dbReference>
<dbReference type="GeneTree" id="ENSGT00390000003781"/>
<dbReference type="InParanoid" id="P67872"/>
<dbReference type="OMA" id="DADFGRC"/>
<dbReference type="OrthoDB" id="9834531at2759"/>
<dbReference type="Reactome" id="R-SSC-1483191">
    <property type="pathway name" value="Synthesis of PC"/>
</dbReference>
<dbReference type="Reactome" id="R-SSC-201688">
    <property type="pathway name" value="WNT mediated activation of DVL"/>
</dbReference>
<dbReference type="Reactome" id="R-SSC-2514853">
    <property type="pathway name" value="Condensation of Prometaphase Chromosomes"/>
</dbReference>
<dbReference type="Reactome" id="R-SSC-6798695">
    <property type="pathway name" value="Neutrophil degranulation"/>
</dbReference>
<dbReference type="Reactome" id="R-SSC-6804756">
    <property type="pathway name" value="Regulation of TP53 Activity through Phosphorylation"/>
</dbReference>
<dbReference type="Reactome" id="R-SSC-6814122">
    <property type="pathway name" value="Cooperation of PDCL (PhLP1) and TRiC/CCT in G-protein beta folding"/>
</dbReference>
<dbReference type="Reactome" id="R-SSC-8934903">
    <property type="pathway name" value="Receptor Mediated Mitophagy"/>
</dbReference>
<dbReference type="Reactome" id="R-SSC-8939243">
    <property type="pathway name" value="RUNX1 interacts with co-factors whose precise effect on RUNX1 targets is not known"/>
</dbReference>
<dbReference type="Reactome" id="R-SSC-8948751">
    <property type="pathway name" value="Regulation of PTEN stability and activity"/>
</dbReference>
<dbReference type="ChiTaRS" id="CSNK2B">
    <property type="organism name" value="pig"/>
</dbReference>
<dbReference type="Proteomes" id="UP000008227">
    <property type="component" value="Chromosome 7"/>
</dbReference>
<dbReference type="Proteomes" id="UP000314985">
    <property type="component" value="Unplaced"/>
</dbReference>
<dbReference type="Proteomes" id="UP000694570">
    <property type="component" value="Unplaced"/>
</dbReference>
<dbReference type="Proteomes" id="UP000694571">
    <property type="component" value="Unplaced"/>
</dbReference>
<dbReference type="Proteomes" id="UP000694720">
    <property type="component" value="Unplaced"/>
</dbReference>
<dbReference type="Proteomes" id="UP000694722">
    <property type="component" value="Unplaced"/>
</dbReference>
<dbReference type="Proteomes" id="UP000694723">
    <property type="component" value="Unplaced"/>
</dbReference>
<dbReference type="Proteomes" id="UP000694724">
    <property type="component" value="Unplaced"/>
</dbReference>
<dbReference type="Proteomes" id="UP000694725">
    <property type="component" value="Unplaced"/>
</dbReference>
<dbReference type="Proteomes" id="UP000694726">
    <property type="component" value="Unplaced"/>
</dbReference>
<dbReference type="Proteomes" id="UP000694727">
    <property type="component" value="Unplaced"/>
</dbReference>
<dbReference type="Proteomes" id="UP000694728">
    <property type="component" value="Unplaced"/>
</dbReference>
<dbReference type="Bgee" id="ENSSSCG00000001414">
    <property type="expression patterns" value="Expressed in oocyte and 44 other cell types or tissues"/>
</dbReference>
<dbReference type="ExpressionAtlas" id="P67872">
    <property type="expression patterns" value="baseline and differential"/>
</dbReference>
<dbReference type="GO" id="GO:0005737">
    <property type="term" value="C:cytoplasm"/>
    <property type="evidence" value="ECO:0000318"/>
    <property type="project" value="GO_Central"/>
</dbReference>
<dbReference type="GO" id="GO:0005634">
    <property type="term" value="C:nucleus"/>
    <property type="evidence" value="ECO:0007669"/>
    <property type="project" value="UniProtKB-SubCell"/>
</dbReference>
<dbReference type="GO" id="GO:0005956">
    <property type="term" value="C:protein kinase CK2 complex"/>
    <property type="evidence" value="ECO:0000318"/>
    <property type="project" value="GO_Central"/>
</dbReference>
<dbReference type="GO" id="GO:0046872">
    <property type="term" value="F:metal ion binding"/>
    <property type="evidence" value="ECO:0007669"/>
    <property type="project" value="UniProtKB-KW"/>
</dbReference>
<dbReference type="GO" id="GO:0019887">
    <property type="term" value="F:protein kinase regulator activity"/>
    <property type="evidence" value="ECO:0000318"/>
    <property type="project" value="GO_Central"/>
</dbReference>
<dbReference type="GO" id="GO:0016055">
    <property type="term" value="P:Wnt signaling pathway"/>
    <property type="evidence" value="ECO:0007669"/>
    <property type="project" value="UniProtKB-KW"/>
</dbReference>
<dbReference type="FunFam" id="1.10.1820.10:FF:000001">
    <property type="entry name" value="Casein kinase II subunit beta"/>
    <property type="match status" value="1"/>
</dbReference>
<dbReference type="FunFam" id="2.20.25.20:FF:000002">
    <property type="entry name" value="Casein kinase II subunit beta"/>
    <property type="match status" value="1"/>
</dbReference>
<dbReference type="Gene3D" id="2.20.25.20">
    <property type="match status" value="1"/>
</dbReference>
<dbReference type="Gene3D" id="1.10.1820.10">
    <property type="entry name" value="protein kinase ck2 holoenzyme, chain C, domain 1"/>
    <property type="match status" value="1"/>
</dbReference>
<dbReference type="InterPro" id="IPR016149">
    <property type="entry name" value="Casein_kin_II_reg-sub_N"/>
</dbReference>
<dbReference type="InterPro" id="IPR035991">
    <property type="entry name" value="Casein_kinase_II_beta-like"/>
</dbReference>
<dbReference type="InterPro" id="IPR000704">
    <property type="entry name" value="Casein_kinase_II_reg-sub"/>
</dbReference>
<dbReference type="PANTHER" id="PTHR11740">
    <property type="entry name" value="CASEIN KINASE II SUBUNIT BETA"/>
    <property type="match status" value="1"/>
</dbReference>
<dbReference type="PANTHER" id="PTHR11740:SF0">
    <property type="entry name" value="CASEIN KINASE II SUBUNIT BETA"/>
    <property type="match status" value="1"/>
</dbReference>
<dbReference type="Pfam" id="PF01214">
    <property type="entry name" value="CK_II_beta"/>
    <property type="match status" value="1"/>
</dbReference>
<dbReference type="PRINTS" id="PR00472">
    <property type="entry name" value="CASNKINASEII"/>
</dbReference>
<dbReference type="SMART" id="SM01085">
    <property type="entry name" value="CK_II_beta"/>
    <property type="match status" value="1"/>
</dbReference>
<dbReference type="SUPFAM" id="SSF57798">
    <property type="entry name" value="Casein kinase II beta subunit"/>
    <property type="match status" value="1"/>
</dbReference>
<dbReference type="PROSITE" id="PS01101">
    <property type="entry name" value="CK2_BETA"/>
    <property type="match status" value="1"/>
</dbReference>
<keyword id="KW-0007">Acetylation</keyword>
<keyword id="KW-1017">Isopeptide bond</keyword>
<keyword id="KW-0479">Metal-binding</keyword>
<keyword id="KW-0539">Nucleus</keyword>
<keyword id="KW-0597">Phosphoprotein</keyword>
<keyword id="KW-1185">Reference proteome</keyword>
<keyword id="KW-0832">Ubl conjugation</keyword>
<keyword id="KW-0879">Wnt signaling pathway</keyword>
<keyword id="KW-0862">Zinc</keyword>
<accession>P67872</accession>
<accession>P07312</accession>
<accession>P13862</accession>
<proteinExistence type="evidence at transcript level"/>
<sequence>MSSSEEVSWISWFCGLRGNEFFCEVDEDYIQDKFNLTGLNEQVPHYRQALDMILDLEPDEELEDNPNQSDLIEQAAEMLYGLIHARYILTNRGIAQMLEKYQQGDFGYCPRVYCENQPMLPIGLSDIPGEAMVKLYCPKCMDVYTPKSSRHHHTDGAYFGTGFPHMLFMVHPEYRPKRPANQFVPRLYGFKIHPMAYQLQLQAASNFKSPVKTIR</sequence>
<gene>
    <name type="primary">CSNK2B</name>
    <name type="synonym">CK2N</name>
</gene>
<feature type="initiator methionine" description="Removed" evidence="2">
    <location>
        <position position="1"/>
    </location>
</feature>
<feature type="chain" id="PRO_0000068238" description="Casein kinase II subunit beta">
    <location>
        <begin position="2"/>
        <end position="215"/>
    </location>
</feature>
<feature type="region of interest" description="Interaction with alpha subunit" evidence="1">
    <location>
        <begin position="188"/>
        <end position="193"/>
    </location>
</feature>
<feature type="short sequence motif" description="KSSR motif" evidence="2">
    <location>
        <begin position="147"/>
        <end position="150"/>
    </location>
</feature>
<feature type="binding site" evidence="1">
    <location>
        <position position="109"/>
    </location>
    <ligand>
        <name>Zn(2+)</name>
        <dbReference type="ChEBI" id="CHEBI:29105"/>
    </ligand>
</feature>
<feature type="binding site" evidence="1">
    <location>
        <position position="114"/>
    </location>
    <ligand>
        <name>Zn(2+)</name>
        <dbReference type="ChEBI" id="CHEBI:29105"/>
    </ligand>
</feature>
<feature type="binding site" evidence="1">
    <location>
        <position position="137"/>
    </location>
    <ligand>
        <name>Zn(2+)</name>
        <dbReference type="ChEBI" id="CHEBI:29105"/>
    </ligand>
</feature>
<feature type="binding site" evidence="1">
    <location>
        <position position="140"/>
    </location>
    <ligand>
        <name>Zn(2+)</name>
        <dbReference type="ChEBI" id="CHEBI:29105"/>
    </ligand>
</feature>
<feature type="modified residue" description="N-acetylserine" evidence="2">
    <location>
        <position position="2"/>
    </location>
</feature>
<feature type="modified residue" description="Phosphoserine; by autocatalysis" evidence="2 4">
    <location>
        <position position="2"/>
    </location>
</feature>
<feature type="modified residue" description="Phosphoserine; by autocatalysis" evidence="2">
    <location>
        <position position="3"/>
    </location>
</feature>
<feature type="modified residue" description="Phosphoserine" evidence="2">
    <location>
        <position position="8"/>
    </location>
</feature>
<feature type="modified residue" description="Phosphothreonine" evidence="2">
    <location>
        <position position="37"/>
    </location>
</feature>
<feature type="modified residue" description="Phosphoserine" evidence="2">
    <location>
        <position position="69"/>
    </location>
</feature>
<feature type="modified residue" description="Phosphoserine" evidence="2">
    <location>
        <position position="209"/>
    </location>
</feature>
<feature type="modified residue" description="N6-acetyllysine; alternate" evidence="2">
    <location>
        <position position="212"/>
    </location>
</feature>
<feature type="cross-link" description="Glycyl lysine isopeptide (Lys-Gly) (interchain with G-Cter in SUMO2); alternate" evidence="2">
    <location>
        <position position="212"/>
    </location>
</feature>